<evidence type="ECO:0000250" key="1">
    <source>
        <dbReference type="UniProtKB" id="Q96N11"/>
    </source>
</evidence>
<evidence type="ECO:0000256" key="2">
    <source>
        <dbReference type="SAM" id="MobiDB-lite"/>
    </source>
</evidence>
<evidence type="ECO:0000303" key="3">
    <source ref="1"/>
</evidence>
<evidence type="ECO:0000305" key="4"/>
<sequence length="475" mass="52353">MSDIRHALLRRDPLSAAKEVLYHLDISLGSALQSSAGPPAGLEKSTVELVEEFIFHVSKDRNIQSKRMSCVQELQLLEIICSYFQEQSKDAIRQVIFSALFSLQGNKADESRMAMLGKLVSMSIAVCRVPILECAAIWLQRTHSAWCVRLAQVLMEDYCTLVPCAISTLQNICSASPRFCCQLITAVTALYDFSTDELTPPPALLEMLVGWITEDPRLLLLTFINSPLNSSLPLGCLEITPLLGLLRWCVKAPLAYHRGRKSAMTNGHGDGEKGTAYEELYSKLHLSVLQVFLMLQVHLTEKNMFCRLTVLPVESVAALIEEVGRLCEKLAPLLDASHIQLALDRLAQALQVAMATGALLCAREDLRALCSRLPHNNLLQLVMSGPVVQPPPHSSPFQPNMYPHIHPGRPSPLSPHSPHQSTLSSPHSPHTVLTAHPTHPALAPHRPLTAHATHPALSPHAFHPASIAFPYRPIR</sequence>
<organism>
    <name type="scientific">Danio rerio</name>
    <name type="common">Zebrafish</name>
    <name type="synonym">Brachydanio rerio</name>
    <dbReference type="NCBI Taxonomy" id="7955"/>
    <lineage>
        <taxon>Eukaryota</taxon>
        <taxon>Metazoa</taxon>
        <taxon>Chordata</taxon>
        <taxon>Craniata</taxon>
        <taxon>Vertebrata</taxon>
        <taxon>Euteleostomi</taxon>
        <taxon>Actinopterygii</taxon>
        <taxon>Neopterygii</taxon>
        <taxon>Teleostei</taxon>
        <taxon>Ostariophysi</taxon>
        <taxon>Cypriniformes</taxon>
        <taxon>Danionidae</taxon>
        <taxon>Danioninae</taxon>
        <taxon>Danio</taxon>
    </lineage>
</organism>
<keyword id="KW-0025">Alternative splicing</keyword>
<keyword id="KW-0158">Chromosome</keyword>
<keyword id="KW-0539">Nucleus</keyword>
<keyword id="KW-1185">Reference proteome</keyword>
<proteinExistence type="evidence at transcript level"/>
<protein>
    <recommendedName>
        <fullName>Integrator complex subunit 15</fullName>
    </recommendedName>
</protein>
<gene>
    <name type="primary">ints15</name>
    <name type="ORF">zgc:56409</name>
</gene>
<dbReference type="EMBL" id="BC052107">
    <property type="protein sequence ID" value="AAH52107.1"/>
    <property type="molecule type" value="mRNA"/>
</dbReference>
<dbReference type="EMBL" id="BC066462">
    <property type="protein sequence ID" value="AAH66462.1"/>
    <property type="molecule type" value="mRNA"/>
</dbReference>
<dbReference type="RefSeq" id="NP_956619.1">
    <property type="nucleotide sequence ID" value="NM_200325.1"/>
</dbReference>
<dbReference type="RefSeq" id="XP_005170908.1">
    <molecule id="Q7ZTY6-1"/>
    <property type="nucleotide sequence ID" value="XM_005170851.5"/>
</dbReference>
<dbReference type="SMR" id="Q7ZTY6"/>
<dbReference type="FunCoup" id="Q7ZTY6">
    <property type="interactions" value="2478"/>
</dbReference>
<dbReference type="STRING" id="7955.ENSDARP00000054842"/>
<dbReference type="PaxDb" id="7955-ENSDARP00000054842"/>
<dbReference type="Ensembl" id="ENSDART00000054843">
    <molecule id="Q7ZTY6-1"/>
    <property type="protein sequence ID" value="ENSDARP00000054842"/>
    <property type="gene ID" value="ENSDARG00000037652"/>
</dbReference>
<dbReference type="GeneID" id="393295"/>
<dbReference type="KEGG" id="dre:393295"/>
<dbReference type="AGR" id="ZFIN:ZDB-GENE-040426-1019"/>
<dbReference type="CTD" id="79034"/>
<dbReference type="ZFIN" id="ZDB-GENE-040426-1019">
    <property type="gene designation" value="ints15"/>
</dbReference>
<dbReference type="eggNOG" id="ENOG502QW9D">
    <property type="taxonomic scope" value="Eukaryota"/>
</dbReference>
<dbReference type="HOGENOM" id="CLU_045490_1_0_1"/>
<dbReference type="InParanoid" id="Q7ZTY6"/>
<dbReference type="OMA" id="DDGDCHQ"/>
<dbReference type="OrthoDB" id="5861309at2759"/>
<dbReference type="PhylomeDB" id="Q7ZTY6"/>
<dbReference type="TreeFam" id="TF324587"/>
<dbReference type="PRO" id="PR:Q7ZTY6"/>
<dbReference type="Proteomes" id="UP000000437">
    <property type="component" value="Chromosome 1"/>
</dbReference>
<dbReference type="Bgee" id="ENSDARG00000037652">
    <property type="expression patterns" value="Expressed in early embryo and 20 other cell types or tissues"/>
</dbReference>
<dbReference type="GO" id="GO:0005694">
    <property type="term" value="C:chromosome"/>
    <property type="evidence" value="ECO:0000250"/>
    <property type="project" value="UniProtKB"/>
</dbReference>
<dbReference type="GO" id="GO:0160232">
    <property type="term" value="C:INTAC complex"/>
    <property type="evidence" value="ECO:0000250"/>
    <property type="project" value="UniProtKB"/>
</dbReference>
<dbReference type="GO" id="GO:0032039">
    <property type="term" value="C:integrator complex"/>
    <property type="evidence" value="ECO:0000250"/>
    <property type="project" value="UniProtKB"/>
</dbReference>
<dbReference type="GO" id="GO:0005634">
    <property type="term" value="C:nucleus"/>
    <property type="evidence" value="ECO:0000250"/>
    <property type="project" value="UniProtKB"/>
</dbReference>
<dbReference type="GO" id="GO:0160240">
    <property type="term" value="P:RNA polymerase II transcription initiation surveillance"/>
    <property type="evidence" value="ECO:0000250"/>
    <property type="project" value="UniProtKB"/>
</dbReference>
<dbReference type="InterPro" id="IPR027844">
    <property type="entry name" value="INTS15"/>
</dbReference>
<dbReference type="PANTHER" id="PTHR14540">
    <property type="entry name" value="INTEGRATOR COMPLEX SUBUNIT 15"/>
    <property type="match status" value="1"/>
</dbReference>
<dbReference type="PANTHER" id="PTHR14540:SF2">
    <property type="entry name" value="INTEGRATOR COMPLEX SUBUNIT 15"/>
    <property type="match status" value="1"/>
</dbReference>
<dbReference type="Pfam" id="PF14964">
    <property type="entry name" value="INTS15"/>
    <property type="match status" value="1"/>
</dbReference>
<accession>Q7ZTY6</accession>
<accession>Q6NYU1</accession>
<comment type="function">
    <text evidence="1">Component of the integrator complex, a multiprotein complex that terminates RNA polymerase II (Pol II) transcription in the promoter-proximal region of genes. The integrator complex provides a quality checkpoint during transcription elongation by driving premature transcription termination of transcripts that are unfavorably configured for transcriptional elongation: the complex terminates transcription by (1) catalyzing dephosphorylation of the C-terminal domain (CTD) of Pol II subunit POLR2A/RPB1 and SUPT5H/SPT5, (2) degrading the exiting nascent RNA transcript via endonuclease activity and (3) promoting the release of Pol II from bound DNA. The integrator complex is also involved in terminating the synthesis of non-coding Pol II transcripts, such as enhancer RNAs (eRNAs), small nuclear RNAs (snRNAs), telomerase RNAs and long non-coding RNAs (lncRNAs). INTS15 is part of the integrator tail module that acts as a platform for the recruitment of transcription factors at promoters. Within the integrator complex, INTS15 is required to bridge different integrator modules.</text>
</comment>
<comment type="subunit">
    <text evidence="1">Component of the Integrator complex, composed of core subunits INTS1, INTS2, INTS3, INTS4, INTS5, INTS6, INTS7, INTS8, INTS9/RC74, INTS10, INTS11/CPSF3L, INTS12, INTS13, INTS14 and INTS15. The core complex associates with protein phosphatase 2A subunits PPP2CA and PPP2R1A, to form the Integrator-PP2A (INTAC) complex. INTS15 is part of the tail subcomplex, composed of INTS10, INTS13, INTS14 and INTS15.</text>
</comment>
<comment type="subcellular location">
    <subcellularLocation>
        <location evidence="1">Nucleus</location>
    </subcellularLocation>
    <subcellularLocation>
        <location evidence="1">Chromosome</location>
    </subcellularLocation>
    <text evidence="1">Associates to RNA polymerase II (Pol II) during active transcription.</text>
</comment>
<comment type="alternative products">
    <event type="alternative splicing"/>
    <isoform>
        <id>Q7ZTY6-1</id>
        <name>1</name>
        <sequence type="displayed"/>
    </isoform>
    <isoform>
        <id>Q7ZTY6-2</id>
        <name>2</name>
        <sequence type="described" ref="VSP_036204"/>
    </isoform>
</comment>
<comment type="similarity">
    <text evidence="4">Belongs to the Integrator subunit 15 family.</text>
</comment>
<reference key="1">
    <citation type="submission" date="2004-02" db="EMBL/GenBank/DDBJ databases">
        <authorList>
            <consortium name="NIH - Zebrafish Gene Collection (ZGC) project"/>
        </authorList>
    </citation>
    <scope>NUCLEOTIDE SEQUENCE [LARGE SCALE MRNA] (ISOFORMS 1 AND 2)</scope>
    <source>
        <tissue>Embryo</tissue>
    </source>
</reference>
<name>INT15_DANRE</name>
<feature type="chain" id="PRO_0000360411" description="Integrator complex subunit 15">
    <location>
        <begin position="1"/>
        <end position="475"/>
    </location>
</feature>
<feature type="region of interest" description="Disordered" evidence="2">
    <location>
        <begin position="402"/>
        <end position="444"/>
    </location>
</feature>
<feature type="compositionally biased region" description="Low complexity" evidence="2">
    <location>
        <begin position="416"/>
        <end position="430"/>
    </location>
</feature>
<feature type="splice variant" id="VSP_036204" description="In isoform 2." evidence="3">
    <location>
        <begin position="403"/>
        <end position="425"/>
    </location>
</feature>
<feature type="sequence conflict" description="In Ref. 1; AAH52107." evidence="4" ref="1">
    <original>R</original>
    <variation>Q</variation>
    <location>
        <position position="5"/>
    </location>
</feature>
<feature type="sequence conflict" description="In Ref. 1; AAH52107." evidence="4" ref="1">
    <original>S</original>
    <variation>P</variation>
    <location>
        <position position="27"/>
    </location>
</feature>
<feature type="sequence conflict" description="In Ref. 1; AAH52107." evidence="4" ref="1">
    <original>A</original>
    <variation>T</variation>
    <location>
        <position position="203"/>
    </location>
</feature>
<feature type="sequence conflict" description="In Ref. 1; AAH52107." evidence="4" ref="1">
    <original>D</original>
    <variation>E</variation>
    <location>
        <position position="270"/>
    </location>
</feature>